<dbReference type="EMBL" id="AE000512">
    <property type="protein sequence ID" value="AAD36543.1"/>
    <property type="molecule type" value="Genomic_DNA"/>
</dbReference>
<dbReference type="PIR" id="D72247">
    <property type="entry name" value="D72247"/>
</dbReference>
<dbReference type="RefSeq" id="NP_229275.1">
    <property type="nucleotide sequence ID" value="NC_000853.1"/>
</dbReference>
<dbReference type="RefSeq" id="WP_004081785.1">
    <property type="nucleotide sequence ID" value="NZ_CP011107.1"/>
</dbReference>
<dbReference type="SMR" id="Q9X1I5"/>
<dbReference type="FunCoup" id="Q9X1I5">
    <property type="interactions" value="403"/>
</dbReference>
<dbReference type="STRING" id="243274.TM_1475"/>
<dbReference type="PaxDb" id="243274-THEMA_06925"/>
<dbReference type="EnsemblBacteria" id="AAD36543">
    <property type="protein sequence ID" value="AAD36543"/>
    <property type="gene ID" value="TM_1475"/>
</dbReference>
<dbReference type="KEGG" id="tma:TM1475"/>
<dbReference type="KEGG" id="tmi:THEMA_06925"/>
<dbReference type="KEGG" id="tmm:Tmari_1483"/>
<dbReference type="KEGG" id="tmw:THMA_1507"/>
<dbReference type="eggNOG" id="COG0099">
    <property type="taxonomic scope" value="Bacteria"/>
</dbReference>
<dbReference type="InParanoid" id="Q9X1I5"/>
<dbReference type="OrthoDB" id="9803610at2"/>
<dbReference type="Proteomes" id="UP000008183">
    <property type="component" value="Chromosome"/>
</dbReference>
<dbReference type="GO" id="GO:0005829">
    <property type="term" value="C:cytosol"/>
    <property type="evidence" value="ECO:0000318"/>
    <property type="project" value="GO_Central"/>
</dbReference>
<dbReference type="GO" id="GO:0015935">
    <property type="term" value="C:small ribosomal subunit"/>
    <property type="evidence" value="ECO:0000318"/>
    <property type="project" value="GO_Central"/>
</dbReference>
<dbReference type="GO" id="GO:0019843">
    <property type="term" value="F:rRNA binding"/>
    <property type="evidence" value="ECO:0007669"/>
    <property type="project" value="UniProtKB-UniRule"/>
</dbReference>
<dbReference type="GO" id="GO:0003735">
    <property type="term" value="F:structural constituent of ribosome"/>
    <property type="evidence" value="ECO:0007669"/>
    <property type="project" value="InterPro"/>
</dbReference>
<dbReference type="GO" id="GO:0000049">
    <property type="term" value="F:tRNA binding"/>
    <property type="evidence" value="ECO:0007669"/>
    <property type="project" value="UniProtKB-UniRule"/>
</dbReference>
<dbReference type="GO" id="GO:0006412">
    <property type="term" value="P:translation"/>
    <property type="evidence" value="ECO:0007669"/>
    <property type="project" value="UniProtKB-UniRule"/>
</dbReference>
<dbReference type="FunFam" id="1.10.8.50:FF:000001">
    <property type="entry name" value="30S ribosomal protein S13"/>
    <property type="match status" value="1"/>
</dbReference>
<dbReference type="FunFam" id="4.10.910.10:FF:000001">
    <property type="entry name" value="30S ribosomal protein S13"/>
    <property type="match status" value="1"/>
</dbReference>
<dbReference type="Gene3D" id="1.10.8.50">
    <property type="match status" value="1"/>
</dbReference>
<dbReference type="Gene3D" id="4.10.910.10">
    <property type="entry name" value="30s ribosomal protein s13, domain 2"/>
    <property type="match status" value="1"/>
</dbReference>
<dbReference type="HAMAP" id="MF_01315">
    <property type="entry name" value="Ribosomal_uS13"/>
    <property type="match status" value="1"/>
</dbReference>
<dbReference type="InterPro" id="IPR027437">
    <property type="entry name" value="Rbsml_uS13_C"/>
</dbReference>
<dbReference type="InterPro" id="IPR001892">
    <property type="entry name" value="Ribosomal_uS13"/>
</dbReference>
<dbReference type="InterPro" id="IPR010979">
    <property type="entry name" value="Ribosomal_uS13-like_H2TH"/>
</dbReference>
<dbReference type="InterPro" id="IPR019980">
    <property type="entry name" value="Ribosomal_uS13_bac-type"/>
</dbReference>
<dbReference type="InterPro" id="IPR018269">
    <property type="entry name" value="Ribosomal_uS13_CS"/>
</dbReference>
<dbReference type="NCBIfam" id="TIGR03631">
    <property type="entry name" value="uS13_bact"/>
    <property type="match status" value="1"/>
</dbReference>
<dbReference type="PANTHER" id="PTHR10871">
    <property type="entry name" value="30S RIBOSOMAL PROTEIN S13/40S RIBOSOMAL PROTEIN S18"/>
    <property type="match status" value="1"/>
</dbReference>
<dbReference type="PANTHER" id="PTHR10871:SF1">
    <property type="entry name" value="SMALL RIBOSOMAL SUBUNIT PROTEIN US13M"/>
    <property type="match status" value="1"/>
</dbReference>
<dbReference type="Pfam" id="PF00416">
    <property type="entry name" value="Ribosomal_S13"/>
    <property type="match status" value="1"/>
</dbReference>
<dbReference type="PIRSF" id="PIRSF002134">
    <property type="entry name" value="Ribosomal_S13"/>
    <property type="match status" value="1"/>
</dbReference>
<dbReference type="SUPFAM" id="SSF46946">
    <property type="entry name" value="S13-like H2TH domain"/>
    <property type="match status" value="1"/>
</dbReference>
<dbReference type="PROSITE" id="PS00646">
    <property type="entry name" value="RIBOSOMAL_S13_1"/>
    <property type="match status" value="1"/>
</dbReference>
<dbReference type="PROSITE" id="PS50159">
    <property type="entry name" value="RIBOSOMAL_S13_2"/>
    <property type="match status" value="1"/>
</dbReference>
<sequence>MARIVGVELPNNKKVWVALTYIYGIGRSRSFEILKNTGIDPEKRVGDLTDEEISKITKYIQDHFKVEGELRSEVERNIRRLIEIGCYRGIRHKLGLPVRGQKTRSNARTRKGPRPSRIKTKKKSS</sequence>
<accession>Q9X1I5</accession>
<feature type="chain" id="PRO_0000132158" description="Small ribosomal subunit protein uS13">
    <location>
        <begin position="1"/>
        <end position="125"/>
    </location>
</feature>
<feature type="region of interest" description="Disordered" evidence="2">
    <location>
        <begin position="97"/>
        <end position="125"/>
    </location>
</feature>
<feature type="compositionally biased region" description="Basic residues" evidence="2">
    <location>
        <begin position="101"/>
        <end position="125"/>
    </location>
</feature>
<keyword id="KW-1185">Reference proteome</keyword>
<keyword id="KW-0687">Ribonucleoprotein</keyword>
<keyword id="KW-0689">Ribosomal protein</keyword>
<keyword id="KW-0694">RNA-binding</keyword>
<keyword id="KW-0699">rRNA-binding</keyword>
<keyword id="KW-0820">tRNA-binding</keyword>
<organism>
    <name type="scientific">Thermotoga maritima (strain ATCC 43589 / DSM 3109 / JCM 10099 / NBRC 100826 / MSB8)</name>
    <dbReference type="NCBI Taxonomy" id="243274"/>
    <lineage>
        <taxon>Bacteria</taxon>
        <taxon>Thermotogati</taxon>
        <taxon>Thermotogota</taxon>
        <taxon>Thermotogae</taxon>
        <taxon>Thermotogales</taxon>
        <taxon>Thermotogaceae</taxon>
        <taxon>Thermotoga</taxon>
    </lineage>
</organism>
<proteinExistence type="inferred from homology"/>
<name>RS13_THEMA</name>
<evidence type="ECO:0000255" key="1">
    <source>
        <dbReference type="HAMAP-Rule" id="MF_01315"/>
    </source>
</evidence>
<evidence type="ECO:0000256" key="2">
    <source>
        <dbReference type="SAM" id="MobiDB-lite"/>
    </source>
</evidence>
<evidence type="ECO:0000305" key="3"/>
<protein>
    <recommendedName>
        <fullName evidence="1">Small ribosomal subunit protein uS13</fullName>
    </recommendedName>
    <alternativeName>
        <fullName evidence="3">30S ribosomal protein S13</fullName>
    </alternativeName>
</protein>
<reference key="1">
    <citation type="journal article" date="1999" name="Nature">
        <title>Evidence for lateral gene transfer between Archaea and Bacteria from genome sequence of Thermotoga maritima.</title>
        <authorList>
            <person name="Nelson K.E."/>
            <person name="Clayton R.A."/>
            <person name="Gill S.R."/>
            <person name="Gwinn M.L."/>
            <person name="Dodson R.J."/>
            <person name="Haft D.H."/>
            <person name="Hickey E.K."/>
            <person name="Peterson J.D."/>
            <person name="Nelson W.C."/>
            <person name="Ketchum K.A."/>
            <person name="McDonald L.A."/>
            <person name="Utterback T.R."/>
            <person name="Malek J.A."/>
            <person name="Linher K.D."/>
            <person name="Garrett M.M."/>
            <person name="Stewart A.M."/>
            <person name="Cotton M.D."/>
            <person name="Pratt M.S."/>
            <person name="Phillips C.A."/>
            <person name="Richardson D.L."/>
            <person name="Heidelberg J.F."/>
            <person name="Sutton G.G."/>
            <person name="Fleischmann R.D."/>
            <person name="Eisen J.A."/>
            <person name="White O."/>
            <person name="Salzberg S.L."/>
            <person name="Smith H.O."/>
            <person name="Venter J.C."/>
            <person name="Fraser C.M."/>
        </authorList>
    </citation>
    <scope>NUCLEOTIDE SEQUENCE [LARGE SCALE GENOMIC DNA]</scope>
    <source>
        <strain>ATCC 43589 / DSM 3109 / JCM 10099 / NBRC 100826 / MSB8</strain>
    </source>
</reference>
<gene>
    <name evidence="1" type="primary">rpsM</name>
    <name type="ordered locus">TM_1475</name>
</gene>
<comment type="function">
    <text evidence="1">Located at the top of the head of the 30S subunit, it contacts several helices of the 16S rRNA. In the 70S ribosome it contacts the 23S rRNA (bridge B1a) and protein L5 of the 50S subunit (bridge B1b), connecting the 2 subunits; these bridges are implicated in subunit movement. Contacts the tRNAs in the A and P-sites.</text>
</comment>
<comment type="subunit">
    <text evidence="1">Part of the 30S ribosomal subunit. Forms a loose heterodimer with protein S19. Forms two bridges to the 50S subunit in the 70S ribosome.</text>
</comment>
<comment type="similarity">
    <text evidence="1">Belongs to the universal ribosomal protein uS13 family.</text>
</comment>